<organism>
    <name type="scientific">Campylobacter jejuni subsp. doylei (strain ATCC BAA-1458 / RM4099 / 269.97)</name>
    <dbReference type="NCBI Taxonomy" id="360109"/>
    <lineage>
        <taxon>Bacteria</taxon>
        <taxon>Pseudomonadati</taxon>
        <taxon>Campylobacterota</taxon>
        <taxon>Epsilonproteobacteria</taxon>
        <taxon>Campylobacterales</taxon>
        <taxon>Campylobacteraceae</taxon>
        <taxon>Campylobacter</taxon>
    </lineage>
</organism>
<accession>A7H2K2</accession>
<sequence length="235" mass="25814">MGRAFEYRRASKEARWDKMSKLFPKLAKAIQVAAKEGGIDPDMNPKLRSAIATAKANNMPKDNIDAAIKRASGKDSADIKNIHYEGKAAHGALVIVECMSDNPTRTVANVKAIFSKNGGEVLQNGSLGFMFTRKAVFHLEKFAGDLEELELDLIDAGFEELEQNEEELVISGDYTAFGELSSAIEAKGLVLKKAGLEYIPNNPVSFSKEQLSDIEKLLDKLEDDDDVQAVYTNID</sequence>
<protein>
    <recommendedName>
        <fullName evidence="1">Probable transcriptional regulatory protein JJD26997_0557</fullName>
    </recommendedName>
</protein>
<evidence type="ECO:0000255" key="1">
    <source>
        <dbReference type="HAMAP-Rule" id="MF_00693"/>
    </source>
</evidence>
<feature type="chain" id="PRO_1000045293" description="Probable transcriptional regulatory protein JJD26997_0557">
    <location>
        <begin position="1"/>
        <end position="235"/>
    </location>
</feature>
<dbReference type="EMBL" id="CP000768">
    <property type="protein sequence ID" value="ABS43140.1"/>
    <property type="molecule type" value="Genomic_DNA"/>
</dbReference>
<dbReference type="SMR" id="A7H2K2"/>
<dbReference type="KEGG" id="cjd:JJD26997_0557"/>
<dbReference type="HOGENOM" id="CLU_062974_2_2_7"/>
<dbReference type="Proteomes" id="UP000002302">
    <property type="component" value="Chromosome"/>
</dbReference>
<dbReference type="GO" id="GO:0005829">
    <property type="term" value="C:cytosol"/>
    <property type="evidence" value="ECO:0007669"/>
    <property type="project" value="TreeGrafter"/>
</dbReference>
<dbReference type="GO" id="GO:0003677">
    <property type="term" value="F:DNA binding"/>
    <property type="evidence" value="ECO:0007669"/>
    <property type="project" value="UniProtKB-UniRule"/>
</dbReference>
<dbReference type="GO" id="GO:0006355">
    <property type="term" value="P:regulation of DNA-templated transcription"/>
    <property type="evidence" value="ECO:0007669"/>
    <property type="project" value="UniProtKB-UniRule"/>
</dbReference>
<dbReference type="FunFam" id="1.10.10.200:FF:000004">
    <property type="entry name" value="Probable transcriptional regulatory protein BSBG_02618"/>
    <property type="match status" value="1"/>
</dbReference>
<dbReference type="Gene3D" id="1.10.10.200">
    <property type="match status" value="1"/>
</dbReference>
<dbReference type="Gene3D" id="3.30.70.980">
    <property type="match status" value="2"/>
</dbReference>
<dbReference type="HAMAP" id="MF_00693">
    <property type="entry name" value="Transcrip_reg_TACO1"/>
    <property type="match status" value="1"/>
</dbReference>
<dbReference type="InterPro" id="IPR017856">
    <property type="entry name" value="Integrase-like_N"/>
</dbReference>
<dbReference type="InterPro" id="IPR048300">
    <property type="entry name" value="TACO1_YebC-like_2nd/3rd_dom"/>
</dbReference>
<dbReference type="InterPro" id="IPR049083">
    <property type="entry name" value="TACO1_YebC_N"/>
</dbReference>
<dbReference type="InterPro" id="IPR002876">
    <property type="entry name" value="Transcrip_reg_TACO1-like"/>
</dbReference>
<dbReference type="InterPro" id="IPR026564">
    <property type="entry name" value="Transcrip_reg_TACO1-like_dom3"/>
</dbReference>
<dbReference type="InterPro" id="IPR029072">
    <property type="entry name" value="YebC-like"/>
</dbReference>
<dbReference type="NCBIfam" id="NF009044">
    <property type="entry name" value="PRK12378.1"/>
    <property type="match status" value="1"/>
</dbReference>
<dbReference type="NCBIfam" id="TIGR01033">
    <property type="entry name" value="YebC/PmpR family DNA-binding transcriptional regulator"/>
    <property type="match status" value="1"/>
</dbReference>
<dbReference type="PANTHER" id="PTHR12532:SF6">
    <property type="entry name" value="TRANSCRIPTIONAL REGULATORY PROTEIN YEBC-RELATED"/>
    <property type="match status" value="1"/>
</dbReference>
<dbReference type="PANTHER" id="PTHR12532">
    <property type="entry name" value="TRANSLATIONAL ACTIVATOR OF CYTOCHROME C OXIDASE 1"/>
    <property type="match status" value="1"/>
</dbReference>
<dbReference type="Pfam" id="PF20772">
    <property type="entry name" value="TACO1_YebC_N"/>
    <property type="match status" value="1"/>
</dbReference>
<dbReference type="Pfam" id="PF01709">
    <property type="entry name" value="Transcrip_reg"/>
    <property type="match status" value="1"/>
</dbReference>
<dbReference type="SUPFAM" id="SSF75625">
    <property type="entry name" value="YebC-like"/>
    <property type="match status" value="1"/>
</dbReference>
<gene>
    <name type="ordered locus">JJD26997_0557</name>
</gene>
<name>Y557_CAMJD</name>
<keyword id="KW-0963">Cytoplasm</keyword>
<keyword id="KW-0238">DNA-binding</keyword>
<keyword id="KW-0804">Transcription</keyword>
<keyword id="KW-0805">Transcription regulation</keyword>
<proteinExistence type="inferred from homology"/>
<comment type="subcellular location">
    <subcellularLocation>
        <location evidence="1">Cytoplasm</location>
    </subcellularLocation>
</comment>
<comment type="similarity">
    <text evidence="1">Belongs to the TACO1 family.</text>
</comment>
<reference key="1">
    <citation type="submission" date="2007-07" db="EMBL/GenBank/DDBJ databases">
        <title>Complete genome sequence of Campylobacter jejuni subsp doylei 269.97 isolated from human blood.</title>
        <authorList>
            <person name="Fouts D.E."/>
            <person name="Mongodin E.F."/>
            <person name="Puiu D."/>
            <person name="Sebastian Y."/>
            <person name="Miller W.G."/>
            <person name="Mandrell R.E."/>
            <person name="Lastovica A.J."/>
            <person name="Nelson K.E."/>
        </authorList>
    </citation>
    <scope>NUCLEOTIDE SEQUENCE [LARGE SCALE GENOMIC DNA]</scope>
    <source>
        <strain>ATCC BAA-1458 / RM4099 / 269.97</strain>
    </source>
</reference>